<protein>
    <recommendedName>
        <fullName>Insertion element IS1 7 protein InsA</fullName>
    </recommendedName>
    <alternativeName>
        <fullName>IS1f</fullName>
    </alternativeName>
</protein>
<accession>P19767</accession>
<accession>Q2M621</accession>
<sequence>MASISIRCPSCSATEGVVRNGKSTAGHQRYLCSPCRKTWQLQFTYTASQPGKHQKIIDMAMNGVGCRASARIMGVGLNTVLRHLKNSGRSR</sequence>
<reference key="1">
    <citation type="journal article" date="1991" name="Gene">
        <title>Four types of IS1 with differences in nucleotide sequence reside in the Escherichia coli K-12 chromosome.</title>
        <authorList>
            <person name="Umeda M."/>
            <person name="Ohtsubo E."/>
        </authorList>
    </citation>
    <scope>NUCLEOTIDE SEQUENCE [GENOMIC DNA]</scope>
    <source>
        <strain>K12 / W3110 / ATCC 27325 / DSM 5911</strain>
    </source>
</reference>
<reference key="2">
    <citation type="journal article" date="1995" name="Nucleic Acids Res.">
        <title>Analysis of the Escherichia coli genome VI: DNA sequence of the region from 92.8 through 100 minutes.</title>
        <authorList>
            <person name="Burland V.D."/>
            <person name="Plunkett G. III"/>
            <person name="Sofia H.J."/>
            <person name="Daniels D.L."/>
            <person name="Blattner F.R."/>
        </authorList>
    </citation>
    <scope>NUCLEOTIDE SEQUENCE [LARGE SCALE GENOMIC DNA]</scope>
    <source>
        <strain>K12 / MG1655 / ATCC 47076</strain>
    </source>
</reference>
<reference key="3">
    <citation type="journal article" date="1997" name="Science">
        <title>The complete genome sequence of Escherichia coli K-12.</title>
        <authorList>
            <person name="Blattner F.R."/>
            <person name="Plunkett G. III"/>
            <person name="Bloch C.A."/>
            <person name="Perna N.T."/>
            <person name="Burland V."/>
            <person name="Riley M."/>
            <person name="Collado-Vides J."/>
            <person name="Glasner J.D."/>
            <person name="Rode C.K."/>
            <person name="Mayhew G.F."/>
            <person name="Gregor J."/>
            <person name="Davis N.W."/>
            <person name="Kirkpatrick H.A."/>
            <person name="Goeden M.A."/>
            <person name="Rose D.J."/>
            <person name="Mau B."/>
            <person name="Shao Y."/>
        </authorList>
    </citation>
    <scope>NUCLEOTIDE SEQUENCE [LARGE SCALE GENOMIC DNA]</scope>
    <source>
        <strain>K12 / MG1655 / ATCC 47076</strain>
    </source>
</reference>
<reference key="4">
    <citation type="journal article" date="2006" name="Mol. Syst. Biol.">
        <title>Highly accurate genome sequences of Escherichia coli K-12 strains MG1655 and W3110.</title>
        <authorList>
            <person name="Hayashi K."/>
            <person name="Morooka N."/>
            <person name="Yamamoto Y."/>
            <person name="Fujita K."/>
            <person name="Isono K."/>
            <person name="Choi S."/>
            <person name="Ohtsubo E."/>
            <person name="Baba T."/>
            <person name="Wanner B.L."/>
            <person name="Mori H."/>
            <person name="Horiuchi T."/>
        </authorList>
    </citation>
    <scope>NUCLEOTIDE SEQUENCE [LARGE SCALE GENOMIC DNA]</scope>
    <source>
        <strain>K12 / W3110 / ATCC 27325 / DSM 5911</strain>
    </source>
</reference>
<name>INSA7_ECOLI</name>
<keyword id="KW-0233">DNA recombination</keyword>
<keyword id="KW-1185">Reference proteome</keyword>
<keyword id="KW-0814">Transposable element</keyword>
<keyword id="KW-0815">Transposition</keyword>
<comment type="function">
    <text>Absolutely required for transposition of IS1.</text>
</comment>
<comment type="similarity">
    <text evidence="1">Belongs to the IS1 elements InsA family.</text>
</comment>
<organism>
    <name type="scientific">Escherichia coli (strain K12)</name>
    <dbReference type="NCBI Taxonomy" id="83333"/>
    <lineage>
        <taxon>Bacteria</taxon>
        <taxon>Pseudomonadati</taxon>
        <taxon>Pseudomonadota</taxon>
        <taxon>Gammaproteobacteria</taxon>
        <taxon>Enterobacterales</taxon>
        <taxon>Enterobacteriaceae</taxon>
        <taxon>Escherichia</taxon>
    </lineage>
</organism>
<evidence type="ECO:0000305" key="1"/>
<gene>
    <name type="primary">insA7</name>
    <name type="ordered locus">b4294</name>
    <name type="ordered locus">JW4254</name>
</gene>
<dbReference type="EMBL" id="X52538">
    <property type="protein sequence ID" value="CAA36774.1"/>
    <property type="molecule type" value="Genomic_DNA"/>
</dbReference>
<dbReference type="EMBL" id="U14003">
    <property type="protein sequence ID" value="AAA97190.1"/>
    <property type="molecule type" value="Genomic_DNA"/>
</dbReference>
<dbReference type="EMBL" id="U00096">
    <property type="protein sequence ID" value="AAC77250.1"/>
    <property type="molecule type" value="Genomic_DNA"/>
</dbReference>
<dbReference type="EMBL" id="AP009048">
    <property type="protein sequence ID" value="BAE78285.1"/>
    <property type="molecule type" value="Genomic_DNA"/>
</dbReference>
<dbReference type="PIR" id="E90800">
    <property type="entry name" value="E90800"/>
</dbReference>
<dbReference type="PIR" id="JN0140">
    <property type="entry name" value="JN0140"/>
</dbReference>
<dbReference type="RefSeq" id="NP_418714.1">
    <property type="nucleotide sequence ID" value="NC_000913.3"/>
</dbReference>
<dbReference type="BioGRID" id="4262753">
    <property type="interactions" value="1"/>
</dbReference>
<dbReference type="FunCoup" id="P19767">
    <property type="interactions" value="24"/>
</dbReference>
<dbReference type="IntAct" id="P19767">
    <property type="interactions" value="1"/>
</dbReference>
<dbReference type="STRING" id="511145.b4294"/>
<dbReference type="PaxDb" id="511145-b4294"/>
<dbReference type="EnsemblBacteria" id="AAC77250">
    <property type="protein sequence ID" value="AAC77250"/>
    <property type="gene ID" value="b4294"/>
</dbReference>
<dbReference type="GeneID" id="948830"/>
<dbReference type="KEGG" id="ecj:JW4254"/>
<dbReference type="KEGG" id="eco:b4294"/>
<dbReference type="PATRIC" id="fig|511145.12.peg.4427"/>
<dbReference type="EchoBASE" id="EB4743"/>
<dbReference type="eggNOG" id="COG3677">
    <property type="taxonomic scope" value="Bacteria"/>
</dbReference>
<dbReference type="HOGENOM" id="CLU_076276_6_3_6"/>
<dbReference type="InParanoid" id="P19767"/>
<dbReference type="OMA" id="NDGSEQR"/>
<dbReference type="PhylomeDB" id="P19767"/>
<dbReference type="BioCyc" id="EcoCyc:G7908-MONOMER"/>
<dbReference type="PRO" id="PR:P19767"/>
<dbReference type="Proteomes" id="UP000000625">
    <property type="component" value="Chromosome"/>
</dbReference>
<dbReference type="GO" id="GO:0006313">
    <property type="term" value="P:DNA transposition"/>
    <property type="evidence" value="ECO:0000318"/>
    <property type="project" value="GO_Central"/>
</dbReference>
<dbReference type="InterPro" id="IPR024431">
    <property type="entry name" value="InsA_HTH_dom"/>
</dbReference>
<dbReference type="InterPro" id="IPR003220">
    <property type="entry name" value="InsA_N_dom_Znf"/>
</dbReference>
<dbReference type="InterPro" id="IPR051252">
    <property type="entry name" value="IS1_transposase_InsA"/>
</dbReference>
<dbReference type="PANTHER" id="PTHR47923">
    <property type="entry name" value="INSERTION ELEMENT IS1 1 PROTEIN INSA-RELATED"/>
    <property type="match status" value="1"/>
</dbReference>
<dbReference type="PANTHER" id="PTHR47923:SF1">
    <property type="entry name" value="INSERTION ELEMENT IS1 1 PROTEIN INSA-RELATED"/>
    <property type="match status" value="1"/>
</dbReference>
<dbReference type="Pfam" id="PF12759">
    <property type="entry name" value="HTH_Tnp_IS1"/>
    <property type="match status" value="1"/>
</dbReference>
<dbReference type="Pfam" id="PF03811">
    <property type="entry name" value="Zn_ribbon_InsA"/>
    <property type="match status" value="1"/>
</dbReference>
<feature type="chain" id="PRO_0000075397" description="Insertion element IS1 7 protein InsA">
    <location>
        <begin position="1"/>
        <end position="91"/>
    </location>
</feature>
<proteinExistence type="inferred from homology"/>